<keyword id="KW-0378">Hydrolase</keyword>
<keyword id="KW-0442">Lipid degradation</keyword>
<keyword id="KW-0551">Lipid droplet</keyword>
<keyword id="KW-0443">Lipid metabolism</keyword>
<keyword id="KW-1185">Reference proteome</keyword>
<evidence type="ECO:0000250" key="1">
    <source>
        <dbReference type="UniProtKB" id="P40308"/>
    </source>
</evidence>
<evidence type="ECO:0000255" key="2">
    <source>
        <dbReference type="PROSITE-ProRule" id="PRU01161"/>
    </source>
</evidence>
<evidence type="ECO:0000269" key="3">
    <source>
    </source>
</evidence>
<organism>
    <name type="scientific">Schizosaccharomyces pombe (strain 972 / ATCC 24843)</name>
    <name type="common">Fission yeast</name>
    <dbReference type="NCBI Taxonomy" id="284812"/>
    <lineage>
        <taxon>Eukaryota</taxon>
        <taxon>Fungi</taxon>
        <taxon>Dikarya</taxon>
        <taxon>Ascomycota</taxon>
        <taxon>Taphrinomycotina</taxon>
        <taxon>Schizosaccharomycetes</taxon>
        <taxon>Schizosaccharomycetales</taxon>
        <taxon>Schizosaccharomycetaceae</taxon>
        <taxon>Schizosaccharomyces</taxon>
    </lineage>
</organism>
<feature type="chain" id="PRO_0000317234" description="Triacylglycerol lipase ptl1">
    <location>
        <begin position="1"/>
        <end position="545"/>
    </location>
</feature>
<feature type="domain" description="PNPLA" evidence="2">
    <location>
        <begin position="182"/>
        <end position="358"/>
    </location>
</feature>
<feature type="short sequence motif" description="GXSXG">
    <location>
        <begin position="213"/>
        <end position="217"/>
    </location>
</feature>
<dbReference type="EC" id="3.1.1.3" evidence="1"/>
<dbReference type="EMBL" id="CU329672">
    <property type="protein sequence ID" value="CAB40183.2"/>
    <property type="molecule type" value="Genomic_DNA"/>
</dbReference>
<dbReference type="PIR" id="T40998">
    <property type="entry name" value="T40998"/>
</dbReference>
<dbReference type="RefSeq" id="NP_588315.2">
    <property type="nucleotide sequence ID" value="NM_001023305.2"/>
</dbReference>
<dbReference type="BioGRID" id="275901">
    <property type="interactions" value="13"/>
</dbReference>
<dbReference type="FunCoup" id="Q9Y7P3">
    <property type="interactions" value="19"/>
</dbReference>
<dbReference type="STRING" id="284812.Q9Y7P3"/>
<dbReference type="iPTMnet" id="Q9Y7P3"/>
<dbReference type="PaxDb" id="4896-SPCC1450.16c.1"/>
<dbReference type="EnsemblFungi" id="SPCC1450.16c.1">
    <property type="protein sequence ID" value="SPCC1450.16c.1:pep"/>
    <property type="gene ID" value="SPCC1450.16c"/>
</dbReference>
<dbReference type="GeneID" id="2539335"/>
<dbReference type="KEGG" id="spo:2539335"/>
<dbReference type="PomBase" id="SPCC1450.16c">
    <property type="gene designation" value="ptl1"/>
</dbReference>
<dbReference type="VEuPathDB" id="FungiDB:SPCC1450.16c"/>
<dbReference type="eggNOG" id="KOG2214">
    <property type="taxonomic scope" value="Eukaryota"/>
</dbReference>
<dbReference type="HOGENOM" id="CLU_009031_5_1_1"/>
<dbReference type="InParanoid" id="Q9Y7P3"/>
<dbReference type="OMA" id="SIVPWPH"/>
<dbReference type="PRO" id="PR:Q9Y7P3"/>
<dbReference type="Proteomes" id="UP000002485">
    <property type="component" value="Chromosome III"/>
</dbReference>
<dbReference type="GO" id="GO:0005811">
    <property type="term" value="C:lipid droplet"/>
    <property type="evidence" value="ECO:0007669"/>
    <property type="project" value="UniProtKB-SubCell"/>
</dbReference>
<dbReference type="GO" id="GO:0004806">
    <property type="term" value="F:triacylglycerol lipase activity"/>
    <property type="evidence" value="ECO:0000315"/>
    <property type="project" value="PomBase"/>
</dbReference>
<dbReference type="GO" id="GO:0016042">
    <property type="term" value="P:lipid catabolic process"/>
    <property type="evidence" value="ECO:0007669"/>
    <property type="project" value="UniProtKB-KW"/>
</dbReference>
<dbReference type="GO" id="GO:0006642">
    <property type="term" value="P:triglyceride mobilization"/>
    <property type="evidence" value="ECO:0000315"/>
    <property type="project" value="PomBase"/>
</dbReference>
<dbReference type="CDD" id="cd07229">
    <property type="entry name" value="Pat_TGL3_like"/>
    <property type="match status" value="1"/>
</dbReference>
<dbReference type="Gene3D" id="3.40.1090.10">
    <property type="entry name" value="Cytosolic phospholipase A2 catalytic domain"/>
    <property type="match status" value="1"/>
</dbReference>
<dbReference type="InterPro" id="IPR016035">
    <property type="entry name" value="Acyl_Trfase/lysoPLipase"/>
</dbReference>
<dbReference type="InterPro" id="IPR050301">
    <property type="entry name" value="NTE"/>
</dbReference>
<dbReference type="InterPro" id="IPR002641">
    <property type="entry name" value="PNPLA_dom"/>
</dbReference>
<dbReference type="InterPro" id="IPR021771">
    <property type="entry name" value="Triacylglycerol_lipase_N"/>
</dbReference>
<dbReference type="PANTHER" id="PTHR14226">
    <property type="entry name" value="NEUROPATHY TARGET ESTERASE/SWISS CHEESE D.MELANOGASTER"/>
    <property type="match status" value="1"/>
</dbReference>
<dbReference type="PANTHER" id="PTHR14226:SF44">
    <property type="entry name" value="TRIACYLGLYCEROL LIPASE 3"/>
    <property type="match status" value="1"/>
</dbReference>
<dbReference type="Pfam" id="PF11815">
    <property type="entry name" value="DUF3336"/>
    <property type="match status" value="1"/>
</dbReference>
<dbReference type="Pfam" id="PF01734">
    <property type="entry name" value="Patatin"/>
    <property type="match status" value="1"/>
</dbReference>
<dbReference type="SUPFAM" id="SSF52151">
    <property type="entry name" value="FabD/lysophospholipase-like"/>
    <property type="match status" value="1"/>
</dbReference>
<dbReference type="PROSITE" id="PS51635">
    <property type="entry name" value="PNPLA"/>
    <property type="match status" value="1"/>
</dbReference>
<reference key="1">
    <citation type="journal article" date="2002" name="Nature">
        <title>The genome sequence of Schizosaccharomyces pombe.</title>
        <authorList>
            <person name="Wood V."/>
            <person name="Gwilliam R."/>
            <person name="Rajandream M.A."/>
            <person name="Lyne M.H."/>
            <person name="Lyne R."/>
            <person name="Stewart A."/>
            <person name="Sgouros J.G."/>
            <person name="Peat N."/>
            <person name="Hayles J."/>
            <person name="Baker S.G."/>
            <person name="Basham D."/>
            <person name="Bowman S."/>
            <person name="Brooks K."/>
            <person name="Brown D."/>
            <person name="Brown S."/>
            <person name="Chillingworth T."/>
            <person name="Churcher C.M."/>
            <person name="Collins M."/>
            <person name="Connor R."/>
            <person name="Cronin A."/>
            <person name="Davis P."/>
            <person name="Feltwell T."/>
            <person name="Fraser A."/>
            <person name="Gentles S."/>
            <person name="Goble A."/>
            <person name="Hamlin N."/>
            <person name="Harris D.E."/>
            <person name="Hidalgo J."/>
            <person name="Hodgson G."/>
            <person name="Holroyd S."/>
            <person name="Hornsby T."/>
            <person name="Howarth S."/>
            <person name="Huckle E.J."/>
            <person name="Hunt S."/>
            <person name="Jagels K."/>
            <person name="James K.D."/>
            <person name="Jones L."/>
            <person name="Jones M."/>
            <person name="Leather S."/>
            <person name="McDonald S."/>
            <person name="McLean J."/>
            <person name="Mooney P."/>
            <person name="Moule S."/>
            <person name="Mungall K.L."/>
            <person name="Murphy L.D."/>
            <person name="Niblett D."/>
            <person name="Odell C."/>
            <person name="Oliver K."/>
            <person name="O'Neil S."/>
            <person name="Pearson D."/>
            <person name="Quail M.A."/>
            <person name="Rabbinowitsch E."/>
            <person name="Rutherford K.M."/>
            <person name="Rutter S."/>
            <person name="Saunders D."/>
            <person name="Seeger K."/>
            <person name="Sharp S."/>
            <person name="Skelton J."/>
            <person name="Simmonds M.N."/>
            <person name="Squares R."/>
            <person name="Squares S."/>
            <person name="Stevens K."/>
            <person name="Taylor K."/>
            <person name="Taylor R.G."/>
            <person name="Tivey A."/>
            <person name="Walsh S.V."/>
            <person name="Warren T."/>
            <person name="Whitehead S."/>
            <person name="Woodward J.R."/>
            <person name="Volckaert G."/>
            <person name="Aert R."/>
            <person name="Robben J."/>
            <person name="Grymonprez B."/>
            <person name="Weltjens I."/>
            <person name="Vanstreels E."/>
            <person name="Rieger M."/>
            <person name="Schaefer M."/>
            <person name="Mueller-Auer S."/>
            <person name="Gabel C."/>
            <person name="Fuchs M."/>
            <person name="Duesterhoeft A."/>
            <person name="Fritzc C."/>
            <person name="Holzer E."/>
            <person name="Moestl D."/>
            <person name="Hilbert H."/>
            <person name="Borzym K."/>
            <person name="Langer I."/>
            <person name="Beck A."/>
            <person name="Lehrach H."/>
            <person name="Reinhardt R."/>
            <person name="Pohl T.M."/>
            <person name="Eger P."/>
            <person name="Zimmermann W."/>
            <person name="Wedler H."/>
            <person name="Wambutt R."/>
            <person name="Purnelle B."/>
            <person name="Goffeau A."/>
            <person name="Cadieu E."/>
            <person name="Dreano S."/>
            <person name="Gloux S."/>
            <person name="Lelaure V."/>
            <person name="Mottier S."/>
            <person name="Galibert F."/>
            <person name="Aves S.J."/>
            <person name="Xiang Z."/>
            <person name="Hunt C."/>
            <person name="Moore K."/>
            <person name="Hurst S.M."/>
            <person name="Lucas M."/>
            <person name="Rochet M."/>
            <person name="Gaillardin C."/>
            <person name="Tallada V.A."/>
            <person name="Garzon A."/>
            <person name="Thode G."/>
            <person name="Daga R.R."/>
            <person name="Cruzado L."/>
            <person name="Jimenez J."/>
            <person name="Sanchez M."/>
            <person name="del Rey F."/>
            <person name="Benito J."/>
            <person name="Dominguez A."/>
            <person name="Revuelta J.L."/>
            <person name="Moreno S."/>
            <person name="Armstrong J."/>
            <person name="Forsburg S.L."/>
            <person name="Cerutti L."/>
            <person name="Lowe T."/>
            <person name="McCombie W.R."/>
            <person name="Paulsen I."/>
            <person name="Potashkin J."/>
            <person name="Shpakovski G.V."/>
            <person name="Ussery D."/>
            <person name="Barrell B.G."/>
            <person name="Nurse P."/>
        </authorList>
    </citation>
    <scope>NUCLEOTIDE SEQUENCE [LARGE SCALE GENOMIC DNA]</scope>
    <source>
        <strain>972 / ATCC 24843</strain>
    </source>
</reference>
<reference key="2">
    <citation type="journal article" date="2011" name="Science">
        <title>Comparative functional genomics of the fission yeasts.</title>
        <authorList>
            <person name="Rhind N."/>
            <person name="Chen Z."/>
            <person name="Yassour M."/>
            <person name="Thompson D.A."/>
            <person name="Haas B.J."/>
            <person name="Habib N."/>
            <person name="Wapinski I."/>
            <person name="Roy S."/>
            <person name="Lin M.F."/>
            <person name="Heiman D.I."/>
            <person name="Young S.K."/>
            <person name="Furuya K."/>
            <person name="Guo Y."/>
            <person name="Pidoux A."/>
            <person name="Chen H.M."/>
            <person name="Robbertse B."/>
            <person name="Goldberg J.M."/>
            <person name="Aoki K."/>
            <person name="Bayne E.H."/>
            <person name="Berlin A.M."/>
            <person name="Desjardins C.A."/>
            <person name="Dobbs E."/>
            <person name="Dukaj L."/>
            <person name="Fan L."/>
            <person name="FitzGerald M.G."/>
            <person name="French C."/>
            <person name="Gujja S."/>
            <person name="Hansen K."/>
            <person name="Keifenheim D."/>
            <person name="Levin J.Z."/>
            <person name="Mosher R.A."/>
            <person name="Mueller C.A."/>
            <person name="Pfiffner J."/>
            <person name="Priest M."/>
            <person name="Russ C."/>
            <person name="Smialowska A."/>
            <person name="Swoboda P."/>
            <person name="Sykes S.M."/>
            <person name="Vaughn M."/>
            <person name="Vengrova S."/>
            <person name="Yoder R."/>
            <person name="Zeng Q."/>
            <person name="Allshire R."/>
            <person name="Baulcombe D."/>
            <person name="Birren B.W."/>
            <person name="Brown W."/>
            <person name="Ekwall K."/>
            <person name="Kellis M."/>
            <person name="Leatherwood J."/>
            <person name="Levin H."/>
            <person name="Margalit H."/>
            <person name="Martienssen R."/>
            <person name="Nieduszynski C.A."/>
            <person name="Spatafora J.W."/>
            <person name="Friedman N."/>
            <person name="Dalgaard J.Z."/>
            <person name="Baumann P."/>
            <person name="Niki H."/>
            <person name="Regev A."/>
            <person name="Nusbaum C."/>
        </authorList>
    </citation>
    <scope>REVISION OF GENE MODEL</scope>
</reference>
<reference key="3">
    <citation type="journal article" date="2012" name="Appl. Microbiol. Biotechnol.">
        <title>Characterization of triglyceride lipase genes of fission yeast Schizosaccharomyces pombe.</title>
        <authorList>
            <person name="Yazawa H."/>
            <person name="Kumagai H."/>
            <person name="Uemura H."/>
        </authorList>
    </citation>
    <scope>FUNCTION</scope>
</reference>
<accession>Q9Y7P3</accession>
<protein>
    <recommendedName>
        <fullName>Triacylglycerol lipase ptl1</fullName>
        <ecNumber evidence="1">3.1.1.3</ecNumber>
    </recommendedName>
</protein>
<name>TGL3_SCHPO</name>
<gene>
    <name type="primary">ptl1</name>
    <name type="ORF">SPCC1450.16c</name>
</gene>
<proteinExistence type="inferred from homology"/>
<comment type="function">
    <text evidence="3">Lipid particle-localized triacylglycerol (TAG) lipase. The lipid droplet/particle is a lipid storage compartment which serves as a depot of energy and building blocks for membrane lipid biosynthesis. Involved in the mobilization of the non-polar storage lipids triacylglycerols (TAGs) from lipid particles by hydrolysis of TAGs, releasing and supplying specific fatty acids to the appropriate metabolic pathways.</text>
</comment>
<comment type="catalytic activity">
    <reaction evidence="1">
        <text>a triacylglycerol + H2O = a diacylglycerol + a fatty acid + H(+)</text>
        <dbReference type="Rhea" id="RHEA:12044"/>
        <dbReference type="ChEBI" id="CHEBI:15377"/>
        <dbReference type="ChEBI" id="CHEBI:15378"/>
        <dbReference type="ChEBI" id="CHEBI:17855"/>
        <dbReference type="ChEBI" id="CHEBI:18035"/>
        <dbReference type="ChEBI" id="CHEBI:28868"/>
        <dbReference type="EC" id="3.1.1.3"/>
    </reaction>
    <physiologicalReaction direction="left-to-right" evidence="1">
        <dbReference type="Rhea" id="RHEA:12045"/>
    </physiologicalReaction>
</comment>
<comment type="subcellular location">
    <subcellularLocation>
        <location evidence="1">Lipid droplet</location>
    </subcellularLocation>
    <text evidence="1">Partially retained in the endoplasmic reticulum in cells lacking triacylglycerols.</text>
</comment>
<sequence>MTALFNFWRIMYANISSIWLLVVSFFEWLFSATSISQQRGSGPRKGKVVMNKDCRSWEDWKVLATTIDKASGRWKWRFTPASDKYDYLLIDRCTVSLKRYRQRKSVYPMLMFLRSSLLRNFGNIGNSSLYTENYSGTKILIEEYVREVNNCLEFLYHTKRLSYDVKCDFFSAARISFGTTCLYFNGGTAFGLYHFGVAKTLWKRNLLPQILAGCASGALIASLLSVYRDEELNGLFDTFPSELWKICQQTSDYSLSKVVEYGNMLDISMIASFVRQRLGTITFQEAFERTGRIVNIVAPPSAVSGSPQVLNYFTAPNVLIWSAVCSSNSWAAIYRSSPLLAKLPDGSTEVCTPKNFIWPYAGLPNTGRSNPYARISEIFNVNHFVITQSRPSLFPTFYDELHHHRVSGYSLKMIRLVGLEMAYRFRQLDILGLLPPRLRRFFVDDYVPSAYITLTPTFSFSDIKHAFTKPSLSDIQYWILVGERATWQAIPLLQVRCKTEISLRHLSKNLTNSYVEPLSVNNLASPFVTNLEENQEKMLKIFKVK</sequence>